<proteinExistence type="inferred from homology"/>
<feature type="chain" id="PRO_0000190109" description="Pyridoxine 5'-phosphate synthase">
    <location>
        <begin position="1"/>
        <end position="246"/>
    </location>
</feature>
<feature type="active site" description="Proton acceptor" evidence="1">
    <location>
        <position position="44"/>
    </location>
</feature>
<feature type="active site" description="Proton acceptor" evidence="1">
    <location>
        <position position="76"/>
    </location>
</feature>
<feature type="active site" description="Proton donor" evidence="1">
    <location>
        <position position="198"/>
    </location>
</feature>
<feature type="binding site" evidence="1">
    <location>
        <position position="8"/>
    </location>
    <ligand>
        <name>3-amino-2-oxopropyl phosphate</name>
        <dbReference type="ChEBI" id="CHEBI:57279"/>
    </ligand>
</feature>
<feature type="binding site" evidence="1">
    <location>
        <position position="19"/>
    </location>
    <ligand>
        <name>3-amino-2-oxopropyl phosphate</name>
        <dbReference type="ChEBI" id="CHEBI:57279"/>
    </ligand>
</feature>
<feature type="binding site" evidence="1">
    <location>
        <position position="46"/>
    </location>
    <ligand>
        <name>1-deoxy-D-xylulose 5-phosphate</name>
        <dbReference type="ChEBI" id="CHEBI:57792"/>
    </ligand>
</feature>
<feature type="binding site" evidence="1">
    <location>
        <position position="51"/>
    </location>
    <ligand>
        <name>1-deoxy-D-xylulose 5-phosphate</name>
        <dbReference type="ChEBI" id="CHEBI:57792"/>
    </ligand>
</feature>
<feature type="binding site" evidence="1">
    <location>
        <position position="106"/>
    </location>
    <ligand>
        <name>1-deoxy-D-xylulose 5-phosphate</name>
        <dbReference type="ChEBI" id="CHEBI:57792"/>
    </ligand>
</feature>
<feature type="binding site" evidence="1">
    <location>
        <position position="199"/>
    </location>
    <ligand>
        <name>3-amino-2-oxopropyl phosphate</name>
        <dbReference type="ChEBI" id="CHEBI:57279"/>
    </ligand>
</feature>
<feature type="binding site" evidence="1">
    <location>
        <begin position="221"/>
        <end position="222"/>
    </location>
    <ligand>
        <name>3-amino-2-oxopropyl phosphate</name>
        <dbReference type="ChEBI" id="CHEBI:57279"/>
    </ligand>
</feature>
<feature type="site" description="Transition state stabilizer" evidence="1">
    <location>
        <position position="157"/>
    </location>
</feature>
<sequence>MPAKLSVNLNAIAMLRNRRDLPWPSVTGLGRAALAAGAAGLTVHPRPDQRHIRFSDLGDIRALIDDEYPQAEFNIEGFPSEAFLDLVEKHEPEQVTLVPDDPMQATSDHGWDFMSKADFLAPIVARLKGRGMRVSLFADPDSLGYERAKAIGADRVELYTGPYGATHDDPAAAARELDRLEKAARAATALGLAVNAGHDLTVDNLPALVKRIPQLAEVSIGHGLTADALMYGIPVTVSRYITALAG</sequence>
<accession>Q8YI24</accession>
<gene>
    <name evidence="1" type="primary">pdxJ</name>
    <name type="ordered locus">BMEI0621</name>
</gene>
<protein>
    <recommendedName>
        <fullName evidence="1">Pyridoxine 5'-phosphate synthase</fullName>
        <shortName evidence="1">PNP synthase</shortName>
        <ecNumber evidence="1">2.6.99.2</ecNumber>
    </recommendedName>
</protein>
<comment type="function">
    <text evidence="1">Catalyzes the complicated ring closure reaction between the two acyclic compounds 1-deoxy-D-xylulose-5-phosphate (DXP) and 3-amino-2-oxopropyl phosphate (1-amino-acetone-3-phosphate or AAP) to form pyridoxine 5'-phosphate (PNP) and inorganic phosphate.</text>
</comment>
<comment type="catalytic activity">
    <reaction evidence="1">
        <text>3-amino-2-oxopropyl phosphate + 1-deoxy-D-xylulose 5-phosphate = pyridoxine 5'-phosphate + phosphate + 2 H2O + H(+)</text>
        <dbReference type="Rhea" id="RHEA:15265"/>
        <dbReference type="ChEBI" id="CHEBI:15377"/>
        <dbReference type="ChEBI" id="CHEBI:15378"/>
        <dbReference type="ChEBI" id="CHEBI:43474"/>
        <dbReference type="ChEBI" id="CHEBI:57279"/>
        <dbReference type="ChEBI" id="CHEBI:57792"/>
        <dbReference type="ChEBI" id="CHEBI:58589"/>
        <dbReference type="EC" id="2.6.99.2"/>
    </reaction>
</comment>
<comment type="pathway">
    <text evidence="1">Cofactor biosynthesis; pyridoxine 5'-phosphate biosynthesis; pyridoxine 5'-phosphate from D-erythrose 4-phosphate: step 5/5.</text>
</comment>
<comment type="subunit">
    <text evidence="1">Homooctamer; tetramer of dimers.</text>
</comment>
<comment type="subcellular location">
    <subcellularLocation>
        <location evidence="1">Cytoplasm</location>
    </subcellularLocation>
</comment>
<comment type="similarity">
    <text evidence="1">Belongs to the PNP synthase family.</text>
</comment>
<evidence type="ECO:0000255" key="1">
    <source>
        <dbReference type="HAMAP-Rule" id="MF_00279"/>
    </source>
</evidence>
<organism>
    <name type="scientific">Brucella melitensis biotype 1 (strain ATCC 23456 / CCUG 17765 / NCTC 10094 / 16M)</name>
    <dbReference type="NCBI Taxonomy" id="224914"/>
    <lineage>
        <taxon>Bacteria</taxon>
        <taxon>Pseudomonadati</taxon>
        <taxon>Pseudomonadota</taxon>
        <taxon>Alphaproteobacteria</taxon>
        <taxon>Hyphomicrobiales</taxon>
        <taxon>Brucellaceae</taxon>
        <taxon>Brucella/Ochrobactrum group</taxon>
        <taxon>Brucella</taxon>
    </lineage>
</organism>
<reference key="1">
    <citation type="journal article" date="2002" name="Proc. Natl. Acad. Sci. U.S.A.">
        <title>The genome sequence of the facultative intracellular pathogen Brucella melitensis.</title>
        <authorList>
            <person name="DelVecchio V.G."/>
            <person name="Kapatral V."/>
            <person name="Redkar R.J."/>
            <person name="Patra G."/>
            <person name="Mujer C."/>
            <person name="Los T."/>
            <person name="Ivanova N."/>
            <person name="Anderson I."/>
            <person name="Bhattacharyya A."/>
            <person name="Lykidis A."/>
            <person name="Reznik G."/>
            <person name="Jablonski L."/>
            <person name="Larsen N."/>
            <person name="D'Souza M."/>
            <person name="Bernal A."/>
            <person name="Mazur M."/>
            <person name="Goltsman E."/>
            <person name="Selkov E."/>
            <person name="Elzer P.H."/>
            <person name="Hagius S."/>
            <person name="O'Callaghan D."/>
            <person name="Letesson J.-J."/>
            <person name="Haselkorn R."/>
            <person name="Kyrpides N.C."/>
            <person name="Overbeek R."/>
        </authorList>
    </citation>
    <scope>NUCLEOTIDE SEQUENCE [LARGE SCALE GENOMIC DNA]</scope>
    <source>
        <strain>ATCC 23456 / CCUG 17765 / NCTC 10094 / 16M</strain>
    </source>
</reference>
<keyword id="KW-0963">Cytoplasm</keyword>
<keyword id="KW-0664">Pyridoxine biosynthesis</keyword>
<keyword id="KW-0808">Transferase</keyword>
<name>PDXJ_BRUME</name>
<dbReference type="EC" id="2.6.99.2" evidence="1"/>
<dbReference type="EMBL" id="AE008917">
    <property type="protein sequence ID" value="AAL51802.1"/>
    <property type="molecule type" value="Genomic_DNA"/>
</dbReference>
<dbReference type="PIR" id="AG3329">
    <property type="entry name" value="AG3329"/>
</dbReference>
<dbReference type="RefSeq" id="WP_002964495.1">
    <property type="nucleotide sequence ID" value="NZ_GG703780.1"/>
</dbReference>
<dbReference type="SMR" id="Q8YI24"/>
<dbReference type="KEGG" id="bme:BMEI0621"/>
<dbReference type="KEGG" id="bmel:DK63_804"/>
<dbReference type="PATRIC" id="fig|224914.52.peg.843"/>
<dbReference type="eggNOG" id="COG0854">
    <property type="taxonomic scope" value="Bacteria"/>
</dbReference>
<dbReference type="PhylomeDB" id="Q8YI24"/>
<dbReference type="UniPathway" id="UPA00244">
    <property type="reaction ID" value="UER00313"/>
</dbReference>
<dbReference type="Proteomes" id="UP000000419">
    <property type="component" value="Chromosome I"/>
</dbReference>
<dbReference type="GO" id="GO:0005829">
    <property type="term" value="C:cytosol"/>
    <property type="evidence" value="ECO:0007669"/>
    <property type="project" value="TreeGrafter"/>
</dbReference>
<dbReference type="GO" id="GO:0033856">
    <property type="term" value="F:pyridoxine 5'-phosphate synthase activity"/>
    <property type="evidence" value="ECO:0007669"/>
    <property type="project" value="UniProtKB-EC"/>
</dbReference>
<dbReference type="GO" id="GO:0008615">
    <property type="term" value="P:pyridoxine biosynthetic process"/>
    <property type="evidence" value="ECO:0007669"/>
    <property type="project" value="UniProtKB-UniRule"/>
</dbReference>
<dbReference type="CDD" id="cd00003">
    <property type="entry name" value="PNPsynthase"/>
    <property type="match status" value="1"/>
</dbReference>
<dbReference type="Gene3D" id="3.20.20.70">
    <property type="entry name" value="Aldolase class I"/>
    <property type="match status" value="1"/>
</dbReference>
<dbReference type="HAMAP" id="MF_00279">
    <property type="entry name" value="PdxJ"/>
    <property type="match status" value="1"/>
</dbReference>
<dbReference type="InterPro" id="IPR013785">
    <property type="entry name" value="Aldolase_TIM"/>
</dbReference>
<dbReference type="InterPro" id="IPR004569">
    <property type="entry name" value="PyrdxlP_synth_PdxJ"/>
</dbReference>
<dbReference type="InterPro" id="IPR036130">
    <property type="entry name" value="Pyridoxine-5'_phos_synth"/>
</dbReference>
<dbReference type="NCBIfam" id="TIGR00559">
    <property type="entry name" value="pdxJ"/>
    <property type="match status" value="1"/>
</dbReference>
<dbReference type="NCBIfam" id="NF003626">
    <property type="entry name" value="PRK05265.1-4"/>
    <property type="match status" value="1"/>
</dbReference>
<dbReference type="PANTHER" id="PTHR30456">
    <property type="entry name" value="PYRIDOXINE 5'-PHOSPHATE SYNTHASE"/>
    <property type="match status" value="1"/>
</dbReference>
<dbReference type="PANTHER" id="PTHR30456:SF0">
    <property type="entry name" value="PYRIDOXINE 5'-PHOSPHATE SYNTHASE"/>
    <property type="match status" value="1"/>
</dbReference>
<dbReference type="Pfam" id="PF03740">
    <property type="entry name" value="PdxJ"/>
    <property type="match status" value="1"/>
</dbReference>
<dbReference type="SUPFAM" id="SSF63892">
    <property type="entry name" value="Pyridoxine 5'-phosphate synthase"/>
    <property type="match status" value="1"/>
</dbReference>